<organism>
    <name type="scientific">Schizosaccharomyces pombe (strain 972 / ATCC 24843)</name>
    <name type="common">Fission yeast</name>
    <dbReference type="NCBI Taxonomy" id="284812"/>
    <lineage>
        <taxon>Eukaryota</taxon>
        <taxon>Fungi</taxon>
        <taxon>Dikarya</taxon>
        <taxon>Ascomycota</taxon>
        <taxon>Taphrinomycotina</taxon>
        <taxon>Schizosaccharomycetes</taxon>
        <taxon>Schizosaccharomycetales</taxon>
        <taxon>Schizosaccharomycetaceae</taxon>
        <taxon>Schizosaccharomyces</taxon>
    </lineage>
</organism>
<evidence type="ECO:0000255" key="1">
    <source>
        <dbReference type="PROSITE-ProRule" id="PRU00810"/>
    </source>
</evidence>
<evidence type="ECO:0000256" key="2">
    <source>
        <dbReference type="SAM" id="MobiDB-lite"/>
    </source>
</evidence>
<evidence type="ECO:0007829" key="3">
    <source>
        <dbReference type="PDB" id="8I03"/>
    </source>
</evidence>
<accession>O74755</accession>
<reference key="1">
    <citation type="journal article" date="2002" name="Nature">
        <title>The genome sequence of Schizosaccharomyces pombe.</title>
        <authorList>
            <person name="Wood V."/>
            <person name="Gwilliam R."/>
            <person name="Rajandream M.A."/>
            <person name="Lyne M.H."/>
            <person name="Lyne R."/>
            <person name="Stewart A."/>
            <person name="Sgouros J.G."/>
            <person name="Peat N."/>
            <person name="Hayles J."/>
            <person name="Baker S.G."/>
            <person name="Basham D."/>
            <person name="Bowman S."/>
            <person name="Brooks K."/>
            <person name="Brown D."/>
            <person name="Brown S."/>
            <person name="Chillingworth T."/>
            <person name="Churcher C.M."/>
            <person name="Collins M."/>
            <person name="Connor R."/>
            <person name="Cronin A."/>
            <person name="Davis P."/>
            <person name="Feltwell T."/>
            <person name="Fraser A."/>
            <person name="Gentles S."/>
            <person name="Goble A."/>
            <person name="Hamlin N."/>
            <person name="Harris D.E."/>
            <person name="Hidalgo J."/>
            <person name="Hodgson G."/>
            <person name="Holroyd S."/>
            <person name="Hornsby T."/>
            <person name="Howarth S."/>
            <person name="Huckle E.J."/>
            <person name="Hunt S."/>
            <person name="Jagels K."/>
            <person name="James K.D."/>
            <person name="Jones L."/>
            <person name="Jones M."/>
            <person name="Leather S."/>
            <person name="McDonald S."/>
            <person name="McLean J."/>
            <person name="Mooney P."/>
            <person name="Moule S."/>
            <person name="Mungall K.L."/>
            <person name="Murphy L.D."/>
            <person name="Niblett D."/>
            <person name="Odell C."/>
            <person name="Oliver K."/>
            <person name="O'Neil S."/>
            <person name="Pearson D."/>
            <person name="Quail M.A."/>
            <person name="Rabbinowitsch E."/>
            <person name="Rutherford K.M."/>
            <person name="Rutter S."/>
            <person name="Saunders D."/>
            <person name="Seeger K."/>
            <person name="Sharp S."/>
            <person name="Skelton J."/>
            <person name="Simmonds M.N."/>
            <person name="Squares R."/>
            <person name="Squares S."/>
            <person name="Stevens K."/>
            <person name="Taylor K."/>
            <person name="Taylor R.G."/>
            <person name="Tivey A."/>
            <person name="Walsh S.V."/>
            <person name="Warren T."/>
            <person name="Whitehead S."/>
            <person name="Woodward J.R."/>
            <person name="Volckaert G."/>
            <person name="Aert R."/>
            <person name="Robben J."/>
            <person name="Grymonprez B."/>
            <person name="Weltjens I."/>
            <person name="Vanstreels E."/>
            <person name="Rieger M."/>
            <person name="Schaefer M."/>
            <person name="Mueller-Auer S."/>
            <person name="Gabel C."/>
            <person name="Fuchs M."/>
            <person name="Duesterhoeft A."/>
            <person name="Fritzc C."/>
            <person name="Holzer E."/>
            <person name="Moestl D."/>
            <person name="Hilbert H."/>
            <person name="Borzym K."/>
            <person name="Langer I."/>
            <person name="Beck A."/>
            <person name="Lehrach H."/>
            <person name="Reinhardt R."/>
            <person name="Pohl T.M."/>
            <person name="Eger P."/>
            <person name="Zimmermann W."/>
            <person name="Wedler H."/>
            <person name="Wambutt R."/>
            <person name="Purnelle B."/>
            <person name="Goffeau A."/>
            <person name="Cadieu E."/>
            <person name="Dreano S."/>
            <person name="Gloux S."/>
            <person name="Lelaure V."/>
            <person name="Mottier S."/>
            <person name="Galibert F."/>
            <person name="Aves S.J."/>
            <person name="Xiang Z."/>
            <person name="Hunt C."/>
            <person name="Moore K."/>
            <person name="Hurst S.M."/>
            <person name="Lucas M."/>
            <person name="Rochet M."/>
            <person name="Gaillardin C."/>
            <person name="Tallada V.A."/>
            <person name="Garzon A."/>
            <person name="Thode G."/>
            <person name="Daga R.R."/>
            <person name="Cruzado L."/>
            <person name="Jimenez J."/>
            <person name="Sanchez M."/>
            <person name="del Rey F."/>
            <person name="Benito J."/>
            <person name="Dominguez A."/>
            <person name="Revuelta J.L."/>
            <person name="Moreno S."/>
            <person name="Armstrong J."/>
            <person name="Forsburg S.L."/>
            <person name="Cerutti L."/>
            <person name="Lowe T."/>
            <person name="McCombie W.R."/>
            <person name="Paulsen I."/>
            <person name="Potashkin J."/>
            <person name="Shpakovski G.V."/>
            <person name="Ussery D."/>
            <person name="Barrell B.G."/>
            <person name="Nurse P."/>
        </authorList>
    </citation>
    <scope>NUCLEOTIDE SEQUENCE [LARGE SCALE GENOMIC DNA]</scope>
    <source>
        <strain>972 / ATCC 24843</strain>
    </source>
</reference>
<proteinExistence type="evidence at protein level"/>
<dbReference type="EMBL" id="CU329671">
    <property type="protein sequence ID" value="CAA21310.1"/>
    <property type="molecule type" value="Genomic_DNA"/>
</dbReference>
<dbReference type="PIR" id="T39663">
    <property type="entry name" value="T39663"/>
</dbReference>
<dbReference type="RefSeq" id="NP_595433.1">
    <property type="nucleotide sequence ID" value="NM_001021341.2"/>
</dbReference>
<dbReference type="PDB" id="8I03">
    <property type="method" value="EM"/>
    <property type="resolution" value="3.20 A"/>
    <property type="chains" value="B=1-1154"/>
</dbReference>
<dbReference type="PDBsum" id="8I03"/>
<dbReference type="EMDB" id="EMD-35093"/>
<dbReference type="SMR" id="O74755"/>
<dbReference type="BioGRID" id="276343">
    <property type="interactions" value="11"/>
</dbReference>
<dbReference type="ComplexPortal" id="CPX-9129">
    <property type="entry name" value="RPD3L histone deacetylase complex"/>
</dbReference>
<dbReference type="FunCoup" id="O74755">
    <property type="interactions" value="22"/>
</dbReference>
<dbReference type="STRING" id="284812.O74755"/>
<dbReference type="iPTMnet" id="O74755"/>
<dbReference type="PaxDb" id="4896-SPBC1734.16c.1"/>
<dbReference type="EnsemblFungi" id="SPBC1734.16c.1">
    <property type="protein sequence ID" value="SPBC1734.16c.1:pep"/>
    <property type="gene ID" value="SPBC1734.16c"/>
</dbReference>
<dbReference type="GeneID" id="2539793"/>
<dbReference type="KEGG" id="spo:2539793"/>
<dbReference type="PomBase" id="SPBC1734.16c">
    <property type="gene designation" value="pst3"/>
</dbReference>
<dbReference type="VEuPathDB" id="FungiDB:SPBC1734.16c"/>
<dbReference type="eggNOG" id="KOG4204">
    <property type="taxonomic scope" value="Eukaryota"/>
</dbReference>
<dbReference type="HOGENOM" id="CLU_001360_2_0_1"/>
<dbReference type="InParanoid" id="O74755"/>
<dbReference type="OMA" id="NYAIAYM"/>
<dbReference type="PhylomeDB" id="O74755"/>
<dbReference type="PRO" id="PR:O74755"/>
<dbReference type="Proteomes" id="UP000002485">
    <property type="component" value="Chromosome II"/>
</dbReference>
<dbReference type="GO" id="GO:0000785">
    <property type="term" value="C:chromatin"/>
    <property type="evidence" value="ECO:0000318"/>
    <property type="project" value="GO_Central"/>
</dbReference>
<dbReference type="GO" id="GO:0005829">
    <property type="term" value="C:cytosol"/>
    <property type="evidence" value="ECO:0007005"/>
    <property type="project" value="PomBase"/>
</dbReference>
<dbReference type="GO" id="GO:0005634">
    <property type="term" value="C:nucleus"/>
    <property type="evidence" value="ECO:0007005"/>
    <property type="project" value="PomBase"/>
</dbReference>
<dbReference type="GO" id="GO:0033698">
    <property type="term" value="C:Rpd3L complex"/>
    <property type="evidence" value="ECO:0000314"/>
    <property type="project" value="PomBase"/>
</dbReference>
<dbReference type="GO" id="GO:0070210">
    <property type="term" value="C:Rpd3L-Expanded complex"/>
    <property type="evidence" value="ECO:0000314"/>
    <property type="project" value="PomBase"/>
</dbReference>
<dbReference type="GO" id="GO:0070822">
    <property type="term" value="C:Sin3-type complex"/>
    <property type="evidence" value="ECO:0000318"/>
    <property type="project" value="GO_Central"/>
</dbReference>
<dbReference type="GO" id="GO:0003714">
    <property type="term" value="F:transcription corepressor activity"/>
    <property type="evidence" value="ECO:0000318"/>
    <property type="project" value="GO_Central"/>
</dbReference>
<dbReference type="GO" id="GO:0006303">
    <property type="term" value="P:double-strand break repair via nonhomologous end joining"/>
    <property type="evidence" value="ECO:0000266"/>
    <property type="project" value="PomBase"/>
</dbReference>
<dbReference type="GO" id="GO:0000122">
    <property type="term" value="P:negative regulation of transcription by RNA polymerase II"/>
    <property type="evidence" value="ECO:0000318"/>
    <property type="project" value="GO_Central"/>
</dbReference>
<dbReference type="GO" id="GO:0045815">
    <property type="term" value="P:transcription initiation-coupled chromatin remodeling"/>
    <property type="evidence" value="ECO:0000305"/>
    <property type="project" value="PomBase"/>
</dbReference>
<dbReference type="FunFam" id="1.20.1160.11:FF:000001">
    <property type="entry name" value="Paired amphipathic helix protein Sin3"/>
    <property type="match status" value="1"/>
</dbReference>
<dbReference type="FunFam" id="1.20.1160.11:FF:000003">
    <property type="entry name" value="Paired amphipathic helix SIN3-like protein"/>
    <property type="match status" value="1"/>
</dbReference>
<dbReference type="Gene3D" id="1.20.1160.11">
    <property type="entry name" value="Paired amphipathic helix"/>
    <property type="match status" value="3"/>
</dbReference>
<dbReference type="InterPro" id="IPR013194">
    <property type="entry name" value="HDAC_interact_dom"/>
</dbReference>
<dbReference type="InterPro" id="IPR003822">
    <property type="entry name" value="PAH"/>
</dbReference>
<dbReference type="InterPro" id="IPR036600">
    <property type="entry name" value="PAH_sf"/>
</dbReference>
<dbReference type="InterPro" id="IPR039774">
    <property type="entry name" value="Sin3-like"/>
</dbReference>
<dbReference type="InterPro" id="IPR031693">
    <property type="entry name" value="Sin3_C"/>
</dbReference>
<dbReference type="PANTHER" id="PTHR12346:SF64">
    <property type="entry name" value="PAIRED AMPHIPATHIC HELIX PROTEIN PST3"/>
    <property type="match status" value="1"/>
</dbReference>
<dbReference type="PANTHER" id="PTHR12346">
    <property type="entry name" value="SIN3B-RELATED"/>
    <property type="match status" value="1"/>
</dbReference>
<dbReference type="Pfam" id="PF02671">
    <property type="entry name" value="PAH"/>
    <property type="match status" value="2"/>
</dbReference>
<dbReference type="Pfam" id="PF08295">
    <property type="entry name" value="Sin3_corepress"/>
    <property type="match status" value="1"/>
</dbReference>
<dbReference type="Pfam" id="PF16879">
    <property type="entry name" value="Sin3a_C"/>
    <property type="match status" value="1"/>
</dbReference>
<dbReference type="SMART" id="SM00761">
    <property type="entry name" value="HDAC_interact"/>
    <property type="match status" value="1"/>
</dbReference>
<dbReference type="SUPFAM" id="SSF47762">
    <property type="entry name" value="PAH2 domain"/>
    <property type="match status" value="2"/>
</dbReference>
<dbReference type="PROSITE" id="PS51477">
    <property type="entry name" value="PAH"/>
    <property type="match status" value="3"/>
</dbReference>
<feature type="chain" id="PRO_0000121543" description="Paired amphipathic helix protein pst3">
    <location>
        <begin position="1"/>
        <end position="1154"/>
    </location>
</feature>
<feature type="domain" description="PAH 1" evidence="1">
    <location>
        <begin position="111"/>
        <end position="181"/>
    </location>
</feature>
<feature type="domain" description="PAH 2" evidence="1">
    <location>
        <begin position="252"/>
        <end position="322"/>
    </location>
</feature>
<feature type="domain" description="PAH 3" evidence="1">
    <location>
        <begin position="403"/>
        <end position="472"/>
    </location>
</feature>
<feature type="region of interest" description="Disordered" evidence="2">
    <location>
        <begin position="1"/>
        <end position="71"/>
    </location>
</feature>
<feature type="region of interest" description="Disordered" evidence="2">
    <location>
        <begin position="91"/>
        <end position="110"/>
    </location>
</feature>
<feature type="region of interest" description="Disordered" evidence="2">
    <location>
        <begin position="199"/>
        <end position="249"/>
    </location>
</feature>
<feature type="region of interest" description="Disordered" evidence="2">
    <location>
        <begin position="321"/>
        <end position="376"/>
    </location>
</feature>
<feature type="region of interest" description="Disordered" evidence="2">
    <location>
        <begin position="797"/>
        <end position="824"/>
    </location>
</feature>
<feature type="compositionally biased region" description="Basic and acidic residues" evidence="2">
    <location>
        <begin position="9"/>
        <end position="27"/>
    </location>
</feature>
<feature type="compositionally biased region" description="Polar residues" evidence="2">
    <location>
        <begin position="32"/>
        <end position="45"/>
    </location>
</feature>
<feature type="compositionally biased region" description="Polar residues" evidence="2">
    <location>
        <begin position="100"/>
        <end position="110"/>
    </location>
</feature>
<feature type="compositionally biased region" description="Low complexity" evidence="2">
    <location>
        <begin position="228"/>
        <end position="241"/>
    </location>
</feature>
<feature type="compositionally biased region" description="Polar residues" evidence="2">
    <location>
        <begin position="323"/>
        <end position="337"/>
    </location>
</feature>
<feature type="compositionally biased region" description="Polar residues" evidence="2">
    <location>
        <begin position="365"/>
        <end position="376"/>
    </location>
</feature>
<feature type="helix" evidence="3">
    <location>
        <begin position="409"/>
        <end position="421"/>
    </location>
</feature>
<feature type="helix" evidence="3">
    <location>
        <begin position="425"/>
        <end position="439"/>
    </location>
</feature>
<feature type="helix" evidence="3">
    <location>
        <begin position="445"/>
        <end position="456"/>
    </location>
</feature>
<feature type="helix" evidence="3">
    <location>
        <begin position="459"/>
        <end position="468"/>
    </location>
</feature>
<feature type="strand" evidence="3">
    <location>
        <begin position="476"/>
        <end position="479"/>
    </location>
</feature>
<feature type="helix" evidence="3">
    <location>
        <begin position="485"/>
        <end position="487"/>
    </location>
</feature>
<feature type="helix" evidence="3">
    <location>
        <begin position="489"/>
        <end position="492"/>
    </location>
</feature>
<feature type="strand" evidence="3">
    <location>
        <begin position="495"/>
        <end position="501"/>
    </location>
</feature>
<feature type="helix" evidence="3">
    <location>
        <begin position="505"/>
        <end position="507"/>
    </location>
</feature>
<feature type="helix" evidence="3">
    <location>
        <begin position="519"/>
        <end position="522"/>
    </location>
</feature>
<feature type="helix" evidence="3">
    <location>
        <begin position="548"/>
        <end position="577"/>
    </location>
</feature>
<feature type="helix" evidence="3">
    <location>
        <begin position="581"/>
        <end position="584"/>
    </location>
</feature>
<feature type="helix" evidence="3">
    <location>
        <begin position="587"/>
        <end position="595"/>
    </location>
</feature>
<feature type="helix" evidence="3">
    <location>
        <begin position="598"/>
        <end position="608"/>
    </location>
</feature>
<feature type="helix" evidence="3">
    <location>
        <begin position="613"/>
        <end position="623"/>
    </location>
</feature>
<feature type="helix" evidence="3">
    <location>
        <begin position="625"/>
        <end position="663"/>
    </location>
</feature>
<feature type="helix" evidence="3">
    <location>
        <begin position="670"/>
        <end position="680"/>
    </location>
</feature>
<feature type="helix" evidence="3">
    <location>
        <begin position="683"/>
        <end position="698"/>
    </location>
</feature>
<feature type="turn" evidence="3">
    <location>
        <begin position="699"/>
        <end position="702"/>
    </location>
</feature>
<feature type="strand" evidence="3">
    <location>
        <begin position="709"/>
        <end position="713"/>
    </location>
</feature>
<feature type="helix" evidence="3">
    <location>
        <begin position="718"/>
        <end position="731"/>
    </location>
</feature>
<feature type="strand" evidence="3">
    <location>
        <begin position="735"/>
        <end position="737"/>
    </location>
</feature>
<feature type="helix" evidence="3">
    <location>
        <begin position="739"/>
        <end position="757"/>
    </location>
</feature>
<feature type="helix" evidence="3">
    <location>
        <begin position="838"/>
        <end position="841"/>
    </location>
</feature>
<feature type="strand" evidence="3">
    <location>
        <begin position="844"/>
        <end position="848"/>
    </location>
</feature>
<feature type="helix" evidence="3">
    <location>
        <begin position="850"/>
        <end position="875"/>
    </location>
</feature>
<feature type="turn" evidence="3">
    <location>
        <begin position="877"/>
        <end position="881"/>
    </location>
</feature>
<feature type="helix" evidence="3">
    <location>
        <begin position="885"/>
        <end position="897"/>
    </location>
</feature>
<feature type="helix" evidence="3">
    <location>
        <begin position="903"/>
        <end position="910"/>
    </location>
</feature>
<feature type="helix" evidence="3">
    <location>
        <begin position="911"/>
        <end position="913"/>
    </location>
</feature>
<feature type="helix" evidence="3">
    <location>
        <begin position="916"/>
        <end position="919"/>
    </location>
</feature>
<feature type="helix" evidence="3">
    <location>
        <begin position="920"/>
        <end position="923"/>
    </location>
</feature>
<feature type="helix" evidence="3">
    <location>
        <begin position="924"/>
        <end position="940"/>
    </location>
</feature>
<feature type="helix" evidence="3">
    <location>
        <begin position="944"/>
        <end position="953"/>
    </location>
</feature>
<feature type="helix" evidence="3">
    <location>
        <begin position="962"/>
        <end position="975"/>
    </location>
</feature>
<feature type="strand" evidence="3">
    <location>
        <begin position="982"/>
        <end position="988"/>
    </location>
</feature>
<feature type="turn" evidence="3">
    <location>
        <begin position="989"/>
        <end position="992"/>
    </location>
</feature>
<feature type="strand" evidence="3">
    <location>
        <begin position="993"/>
        <end position="999"/>
    </location>
</feature>
<feature type="helix" evidence="3">
    <location>
        <begin position="1012"/>
        <end position="1025"/>
    </location>
</feature>
<feature type="turn" evidence="3">
    <location>
        <begin position="1034"/>
        <end position="1036"/>
    </location>
</feature>
<feature type="strand" evidence="3">
    <location>
        <begin position="1078"/>
        <end position="1080"/>
    </location>
</feature>
<feature type="strand" evidence="3">
    <location>
        <begin position="1082"/>
        <end position="1084"/>
    </location>
</feature>
<feature type="strand" evidence="3">
    <location>
        <begin position="1087"/>
        <end position="1089"/>
    </location>
</feature>
<feature type="strand" evidence="3">
    <location>
        <begin position="1094"/>
        <end position="1098"/>
    </location>
</feature>
<feature type="helix" evidence="3">
    <location>
        <begin position="1107"/>
        <end position="1124"/>
    </location>
</feature>
<feature type="helix" evidence="3">
    <location>
        <begin position="1136"/>
        <end position="1144"/>
    </location>
</feature>
<gene>
    <name type="primary">pst3</name>
    <name type="ORF">SPBC1734.16c</name>
</gene>
<name>PST3_SCHPO</name>
<protein>
    <recommendedName>
        <fullName>Paired amphipathic helix protein pst3</fullName>
    </recommendedName>
    <alternativeName>
        <fullName>SIN3 homolog 3</fullName>
    </alternativeName>
</protein>
<keyword id="KW-0002">3D-structure</keyword>
<keyword id="KW-0539">Nucleus</keyword>
<keyword id="KW-1185">Reference proteome</keyword>
<keyword id="KW-0677">Repeat</keyword>
<comment type="subcellular location">
    <subcellularLocation>
        <location evidence="1">Nucleus</location>
    </subcellularLocation>
</comment>
<sequence>MDVMNVPVDSERDNPGDKVETQSDKNHLPKASPSQSQSPVNTSLHNGDGKDNGVATEPVENKQILSERSVTRDDYEKGKTIVSSLALSSISGKDGSISSQNAEGLSSSSNRPLDVNDALSYLELVKYYFSERREIYNRFLEIMRDFKSQALDTLGVINRVSELFNGYPQLIEGFNTFLPSGYKIEVQLDSSNTSVVRVGTPMHPLPQQGVQSTLPVAPSNEDQRTMESTSPTDSQPQPSAPNLVSSTENEKPRVDFNYAIAYMNKVKARYPPNSDTYMEFLGVLRTYQKAQKSIFEVRARVAEIFKDSPDLLEEFKLFLPDNVDSTEPSTPNVQKSPNRLPPVGNFSLPPSAPVREKRNRPAHSAQISRSISKTSRMYRQTAEEPLNSYSLHVYPQKITAPTSPYAATQEELLAFTTIRQHLPDTLAFHKFLELLHLYREKLLDKTELLNSFSKLVRNDNLTLWFSEFIRWSDNPILVKNEPVDERVYLPETFECISLTYRKLPDSWKQDKCSGRDDLDNSVLNDDYISVAPKPSHVKNIMHHENQYLQALQLVEDERYDYDRVLNTTESAIKILANFCEPTIHEHLETALQELERSKRIIKNALIIVYGKEHANLALDTLFKKLPTAAPVLLKRIKTKDQEWRRSKREWSKIWRQIEKKNAQAAFDDRYCRIEGRDRRGLSYSRILRDIDDIYQRQKHRIDGAKLGFQFTQVLCDSLIFLNILRLSDAQLTNSSFYSYADKGRISAVLKALLSQFFGIPLPREALETNLASENIESVKKHRDGLSKIFIRPESADNSNNTNVSFQTDETQTEDETMSDIHPDDVENHSKSKFLGEESKNIIGYNFFGNATMYVLFRLICVCYSRLEHIKLFVESSTIYASSTGGYENILNICEKYLKGSCSRLEFRKYLQKFNNETCYMICSIERLLKVIFYRIHEILLDPKLGQLLLLFESDGANSVTTPREQMVYRNHVESILAPESKIFNMRWYPLEKRLCIQQLLPADLTMHDFENPAKAFMYYVDSYAISHITEGVDLMQVKMPFLRRSLQRISQQGYLAGRGSGRLHSLFNEHFCKSNLQLFFSTDTYVIFFEPNTENVYINSYNLWVDQSSQSKKQNRTTNWRRWLESDEGWRKSKANTDIKFFSETTLDQCIEAM</sequence>